<dbReference type="EC" id="4.1.99.12" evidence="1"/>
<dbReference type="EMBL" id="CU928161">
    <property type="protein sequence ID" value="CAR04673.1"/>
    <property type="molecule type" value="Genomic_DNA"/>
</dbReference>
<dbReference type="RefSeq" id="WP_001076989.1">
    <property type="nucleotide sequence ID" value="NC_011742.1"/>
</dbReference>
<dbReference type="SMR" id="B7MAC3"/>
<dbReference type="KEGG" id="ecz:ECS88_3444"/>
<dbReference type="HOGENOM" id="CLU_020273_3_0_6"/>
<dbReference type="UniPathway" id="UPA00275">
    <property type="reaction ID" value="UER00399"/>
</dbReference>
<dbReference type="Proteomes" id="UP000000747">
    <property type="component" value="Chromosome"/>
</dbReference>
<dbReference type="GO" id="GO:0005829">
    <property type="term" value="C:cytosol"/>
    <property type="evidence" value="ECO:0007669"/>
    <property type="project" value="TreeGrafter"/>
</dbReference>
<dbReference type="GO" id="GO:0008686">
    <property type="term" value="F:3,4-dihydroxy-2-butanone-4-phosphate synthase activity"/>
    <property type="evidence" value="ECO:0007669"/>
    <property type="project" value="UniProtKB-UniRule"/>
</dbReference>
<dbReference type="GO" id="GO:0000287">
    <property type="term" value="F:magnesium ion binding"/>
    <property type="evidence" value="ECO:0007669"/>
    <property type="project" value="UniProtKB-UniRule"/>
</dbReference>
<dbReference type="GO" id="GO:0030145">
    <property type="term" value="F:manganese ion binding"/>
    <property type="evidence" value="ECO:0007669"/>
    <property type="project" value="UniProtKB-UniRule"/>
</dbReference>
<dbReference type="GO" id="GO:0009231">
    <property type="term" value="P:riboflavin biosynthetic process"/>
    <property type="evidence" value="ECO:0007669"/>
    <property type="project" value="UniProtKB-UniRule"/>
</dbReference>
<dbReference type="FunFam" id="3.90.870.10:FF:000002">
    <property type="entry name" value="3,4-dihydroxy-2-butanone 4-phosphate synthase"/>
    <property type="match status" value="1"/>
</dbReference>
<dbReference type="Gene3D" id="3.90.870.10">
    <property type="entry name" value="DHBP synthase"/>
    <property type="match status" value="1"/>
</dbReference>
<dbReference type="HAMAP" id="MF_00180">
    <property type="entry name" value="RibB"/>
    <property type="match status" value="1"/>
</dbReference>
<dbReference type="InterPro" id="IPR017945">
    <property type="entry name" value="DHBP_synth_RibB-like_a/b_dom"/>
</dbReference>
<dbReference type="InterPro" id="IPR000422">
    <property type="entry name" value="DHBP_synthase_RibB"/>
</dbReference>
<dbReference type="NCBIfam" id="TIGR00506">
    <property type="entry name" value="ribB"/>
    <property type="match status" value="1"/>
</dbReference>
<dbReference type="PANTHER" id="PTHR21327:SF38">
    <property type="entry name" value="3,4-DIHYDROXY-2-BUTANONE 4-PHOSPHATE SYNTHASE"/>
    <property type="match status" value="1"/>
</dbReference>
<dbReference type="PANTHER" id="PTHR21327">
    <property type="entry name" value="GTP CYCLOHYDROLASE II-RELATED"/>
    <property type="match status" value="1"/>
</dbReference>
<dbReference type="Pfam" id="PF00926">
    <property type="entry name" value="DHBP_synthase"/>
    <property type="match status" value="1"/>
</dbReference>
<dbReference type="SUPFAM" id="SSF55821">
    <property type="entry name" value="YrdC/RibB"/>
    <property type="match status" value="1"/>
</dbReference>
<proteinExistence type="inferred from homology"/>
<accession>B7MAC3</accession>
<reference key="1">
    <citation type="journal article" date="2009" name="PLoS Genet.">
        <title>Organised genome dynamics in the Escherichia coli species results in highly diverse adaptive paths.</title>
        <authorList>
            <person name="Touchon M."/>
            <person name="Hoede C."/>
            <person name="Tenaillon O."/>
            <person name="Barbe V."/>
            <person name="Baeriswyl S."/>
            <person name="Bidet P."/>
            <person name="Bingen E."/>
            <person name="Bonacorsi S."/>
            <person name="Bouchier C."/>
            <person name="Bouvet O."/>
            <person name="Calteau A."/>
            <person name="Chiapello H."/>
            <person name="Clermont O."/>
            <person name="Cruveiller S."/>
            <person name="Danchin A."/>
            <person name="Diard M."/>
            <person name="Dossat C."/>
            <person name="Karoui M.E."/>
            <person name="Frapy E."/>
            <person name="Garry L."/>
            <person name="Ghigo J.M."/>
            <person name="Gilles A.M."/>
            <person name="Johnson J."/>
            <person name="Le Bouguenec C."/>
            <person name="Lescat M."/>
            <person name="Mangenot S."/>
            <person name="Martinez-Jehanne V."/>
            <person name="Matic I."/>
            <person name="Nassif X."/>
            <person name="Oztas S."/>
            <person name="Petit M.A."/>
            <person name="Pichon C."/>
            <person name="Rouy Z."/>
            <person name="Ruf C.S."/>
            <person name="Schneider D."/>
            <person name="Tourret J."/>
            <person name="Vacherie B."/>
            <person name="Vallenet D."/>
            <person name="Medigue C."/>
            <person name="Rocha E.P.C."/>
            <person name="Denamur E."/>
        </authorList>
    </citation>
    <scope>NUCLEOTIDE SEQUENCE [LARGE SCALE GENOMIC DNA]</scope>
    <source>
        <strain>S88 / ExPEC</strain>
    </source>
</reference>
<feature type="chain" id="PRO_1000118435" description="3,4-dihydroxy-2-butanone 4-phosphate synthase">
    <location>
        <begin position="1"/>
        <end position="217"/>
    </location>
</feature>
<feature type="binding site" evidence="1">
    <location>
        <begin position="37"/>
        <end position="38"/>
    </location>
    <ligand>
        <name>D-ribulose 5-phosphate</name>
        <dbReference type="ChEBI" id="CHEBI:58121"/>
    </ligand>
</feature>
<feature type="binding site" evidence="1">
    <location>
        <position position="38"/>
    </location>
    <ligand>
        <name>Mg(2+)</name>
        <dbReference type="ChEBI" id="CHEBI:18420"/>
        <label>1</label>
    </ligand>
</feature>
<feature type="binding site" evidence="1">
    <location>
        <position position="38"/>
    </location>
    <ligand>
        <name>Mg(2+)</name>
        <dbReference type="ChEBI" id="CHEBI:18420"/>
        <label>2</label>
    </ligand>
</feature>
<feature type="binding site" evidence="1">
    <location>
        <position position="42"/>
    </location>
    <ligand>
        <name>D-ribulose 5-phosphate</name>
        <dbReference type="ChEBI" id="CHEBI:58121"/>
    </ligand>
</feature>
<feature type="binding site" evidence="1">
    <location>
        <begin position="150"/>
        <end position="154"/>
    </location>
    <ligand>
        <name>D-ribulose 5-phosphate</name>
        <dbReference type="ChEBI" id="CHEBI:58121"/>
    </ligand>
</feature>
<feature type="binding site" evidence="1">
    <location>
        <position position="153"/>
    </location>
    <ligand>
        <name>Mg(2+)</name>
        <dbReference type="ChEBI" id="CHEBI:18420"/>
        <label>2</label>
    </ligand>
</feature>
<feature type="binding site" evidence="1">
    <location>
        <position position="174"/>
    </location>
    <ligand>
        <name>D-ribulose 5-phosphate</name>
        <dbReference type="ChEBI" id="CHEBI:58121"/>
    </ligand>
</feature>
<feature type="site" description="Essential for catalytic activity" evidence="1">
    <location>
        <position position="136"/>
    </location>
</feature>
<feature type="site" description="Essential for catalytic activity" evidence="1">
    <location>
        <position position="174"/>
    </location>
</feature>
<evidence type="ECO:0000255" key="1">
    <source>
        <dbReference type="HAMAP-Rule" id="MF_00180"/>
    </source>
</evidence>
<protein>
    <recommendedName>
        <fullName evidence="1">3,4-dihydroxy-2-butanone 4-phosphate synthase</fullName>
        <shortName evidence="1">DHBP synthase</shortName>
        <ecNumber evidence="1">4.1.99.12</ecNumber>
    </recommendedName>
</protein>
<sequence>MNQTLLSSFGTPFERVENALAALREGRGVMVLDDEDRENEGDMIFPAETMTVEQMALTIRHGSGIVCLCITDDRRKQLDLPMMVENNTSAYGTGFTVTIEAAEGVTTGVSAADRITTVRAAIADGAKPSDLNRPGHVFPLRAQAGGVLTRGGHTEATIDLMTLAGFKPAGVLCELTNDDGTMARAPECIEFANKHNMALVTIEDLVAYRQAHERKAS</sequence>
<name>RIBB_ECO45</name>
<comment type="function">
    <text evidence="1">Catalyzes the conversion of D-ribulose 5-phosphate to formate and 3,4-dihydroxy-2-butanone 4-phosphate.</text>
</comment>
<comment type="catalytic activity">
    <reaction evidence="1">
        <text>D-ribulose 5-phosphate = (2S)-2-hydroxy-3-oxobutyl phosphate + formate + H(+)</text>
        <dbReference type="Rhea" id="RHEA:18457"/>
        <dbReference type="ChEBI" id="CHEBI:15378"/>
        <dbReference type="ChEBI" id="CHEBI:15740"/>
        <dbReference type="ChEBI" id="CHEBI:58121"/>
        <dbReference type="ChEBI" id="CHEBI:58830"/>
        <dbReference type="EC" id="4.1.99.12"/>
    </reaction>
</comment>
<comment type="cofactor">
    <cofactor evidence="1">
        <name>Mg(2+)</name>
        <dbReference type="ChEBI" id="CHEBI:18420"/>
    </cofactor>
    <cofactor evidence="1">
        <name>Mn(2+)</name>
        <dbReference type="ChEBI" id="CHEBI:29035"/>
    </cofactor>
    <text evidence="1">Binds 2 divalent metal cations per subunit. Magnesium or manganese.</text>
</comment>
<comment type="pathway">
    <text evidence="1">Cofactor biosynthesis; riboflavin biosynthesis; 2-hydroxy-3-oxobutyl phosphate from D-ribulose 5-phosphate: step 1/1.</text>
</comment>
<comment type="subunit">
    <text evidence="1">Homodimer.</text>
</comment>
<comment type="similarity">
    <text evidence="1">Belongs to the DHBP synthase family.</text>
</comment>
<keyword id="KW-0456">Lyase</keyword>
<keyword id="KW-0460">Magnesium</keyword>
<keyword id="KW-0464">Manganese</keyword>
<keyword id="KW-0479">Metal-binding</keyword>
<keyword id="KW-1185">Reference proteome</keyword>
<keyword id="KW-0686">Riboflavin biosynthesis</keyword>
<gene>
    <name evidence="1" type="primary">ribB</name>
    <name type="ordered locus">ECS88_3444</name>
</gene>
<organism>
    <name type="scientific">Escherichia coli O45:K1 (strain S88 / ExPEC)</name>
    <dbReference type="NCBI Taxonomy" id="585035"/>
    <lineage>
        <taxon>Bacteria</taxon>
        <taxon>Pseudomonadati</taxon>
        <taxon>Pseudomonadota</taxon>
        <taxon>Gammaproteobacteria</taxon>
        <taxon>Enterobacterales</taxon>
        <taxon>Enterobacteriaceae</taxon>
        <taxon>Escherichia</taxon>
    </lineage>
</organism>